<dbReference type="EC" id="2.7.4.6"/>
<dbReference type="EMBL" id="X92957">
    <property type="protein sequence ID" value="CAA63533.1"/>
    <property type="molecule type" value="mRNA"/>
</dbReference>
<dbReference type="PDB" id="1BE4">
    <property type="method" value="X-ray"/>
    <property type="resolution" value="2.40 A"/>
    <property type="chains" value="A/B/C=2-152"/>
</dbReference>
<dbReference type="PDBsum" id="1BE4"/>
<dbReference type="SMR" id="P52175"/>
<dbReference type="FunCoup" id="P52175">
    <property type="interactions" value="1997"/>
</dbReference>
<dbReference type="STRING" id="9913.ENSBTAP00000006106"/>
<dbReference type="Ensembl" id="ENSBTAT00000006106.6">
    <property type="protein sequence ID" value="ENSBTAP00000006106.5"/>
    <property type="gene ID" value="ENSBTAG00000004651.7"/>
</dbReference>
<dbReference type="VEuPathDB" id="HostDB:ENSBTAG00000004651"/>
<dbReference type="GeneTree" id="ENSGT00940000162213"/>
<dbReference type="InParanoid" id="P52175"/>
<dbReference type="OMA" id="QHYGEHK"/>
<dbReference type="OrthoDB" id="2162449at2759"/>
<dbReference type="Reactome" id="R-BTA-499943">
    <property type="pathway name" value="Interconversion of nucleotide di- and triphosphates"/>
</dbReference>
<dbReference type="Reactome" id="R-BTA-9748787">
    <property type="pathway name" value="Azathioprine ADME"/>
</dbReference>
<dbReference type="Reactome" id="R-BTA-9755088">
    <property type="pathway name" value="Ribavirin ADME"/>
</dbReference>
<dbReference type="EvolutionaryTrace" id="P52175"/>
<dbReference type="Proteomes" id="UP000009136">
    <property type="component" value="Chromosome 19"/>
</dbReference>
<dbReference type="Bgee" id="ENSBTAG00000004651">
    <property type="expression patterns" value="Expressed in retina and 104 other cell types or tissues"/>
</dbReference>
<dbReference type="GO" id="GO:0005829">
    <property type="term" value="C:cytosol"/>
    <property type="evidence" value="ECO:0007669"/>
    <property type="project" value="Ensembl"/>
</dbReference>
<dbReference type="GO" id="GO:0005769">
    <property type="term" value="C:early endosome"/>
    <property type="evidence" value="ECO:0007669"/>
    <property type="project" value="Ensembl"/>
</dbReference>
<dbReference type="GO" id="GO:0005634">
    <property type="term" value="C:nucleus"/>
    <property type="evidence" value="ECO:0007669"/>
    <property type="project" value="UniProtKB-SubCell"/>
</dbReference>
<dbReference type="GO" id="GO:0032587">
    <property type="term" value="C:ruffle membrane"/>
    <property type="evidence" value="ECO:0007669"/>
    <property type="project" value="Ensembl"/>
</dbReference>
<dbReference type="GO" id="GO:0008408">
    <property type="term" value="F:3'-5' exonuclease activity"/>
    <property type="evidence" value="ECO:0007669"/>
    <property type="project" value="Ensembl"/>
</dbReference>
<dbReference type="GO" id="GO:0005524">
    <property type="term" value="F:ATP binding"/>
    <property type="evidence" value="ECO:0007669"/>
    <property type="project" value="UniProtKB-KW"/>
</dbReference>
<dbReference type="GO" id="GO:0004536">
    <property type="term" value="F:DNA nuclease activity"/>
    <property type="evidence" value="ECO:0007669"/>
    <property type="project" value="Ensembl"/>
</dbReference>
<dbReference type="GO" id="GO:0005525">
    <property type="term" value="F:GTP binding"/>
    <property type="evidence" value="ECO:0007669"/>
    <property type="project" value="Ensembl"/>
</dbReference>
<dbReference type="GO" id="GO:0042802">
    <property type="term" value="F:identical protein binding"/>
    <property type="evidence" value="ECO:0007669"/>
    <property type="project" value="Ensembl"/>
</dbReference>
<dbReference type="GO" id="GO:0000287">
    <property type="term" value="F:magnesium ion binding"/>
    <property type="evidence" value="ECO:0007669"/>
    <property type="project" value="Ensembl"/>
</dbReference>
<dbReference type="GO" id="GO:0004550">
    <property type="term" value="F:nucleoside diphosphate kinase activity"/>
    <property type="evidence" value="ECO:0007669"/>
    <property type="project" value="UniProtKB-EC"/>
</dbReference>
<dbReference type="GO" id="GO:0043024">
    <property type="term" value="F:ribosomal small subunit binding"/>
    <property type="evidence" value="ECO:0007669"/>
    <property type="project" value="Ensembl"/>
</dbReference>
<dbReference type="GO" id="GO:0030154">
    <property type="term" value="P:cell differentiation"/>
    <property type="evidence" value="ECO:0007669"/>
    <property type="project" value="UniProtKB-KW"/>
</dbReference>
<dbReference type="GO" id="GO:0006241">
    <property type="term" value="P:CTP biosynthetic process"/>
    <property type="evidence" value="ECO:0007669"/>
    <property type="project" value="InterPro"/>
</dbReference>
<dbReference type="GO" id="GO:0006897">
    <property type="term" value="P:endocytosis"/>
    <property type="evidence" value="ECO:0007669"/>
    <property type="project" value="UniProtKB-KW"/>
</dbReference>
<dbReference type="GO" id="GO:0006183">
    <property type="term" value="P:GTP biosynthetic process"/>
    <property type="evidence" value="ECO:0007669"/>
    <property type="project" value="InterPro"/>
</dbReference>
<dbReference type="GO" id="GO:0007595">
    <property type="term" value="P:lactation"/>
    <property type="evidence" value="ECO:0007669"/>
    <property type="project" value="Ensembl"/>
</dbReference>
<dbReference type="GO" id="GO:0007399">
    <property type="term" value="P:nervous system development"/>
    <property type="evidence" value="ECO:0007669"/>
    <property type="project" value="UniProtKB-KW"/>
</dbReference>
<dbReference type="GO" id="GO:0050679">
    <property type="term" value="P:positive regulation of epithelial cell proliferation"/>
    <property type="evidence" value="ECO:0007669"/>
    <property type="project" value="Ensembl"/>
</dbReference>
<dbReference type="GO" id="GO:0006228">
    <property type="term" value="P:UTP biosynthetic process"/>
    <property type="evidence" value="ECO:0007669"/>
    <property type="project" value="InterPro"/>
</dbReference>
<dbReference type="CDD" id="cd04413">
    <property type="entry name" value="NDPk_I"/>
    <property type="match status" value="1"/>
</dbReference>
<dbReference type="FunFam" id="3.30.70.141:FF:000039">
    <property type="entry name" value="Nucleoside diphosphate kinase B"/>
    <property type="match status" value="1"/>
</dbReference>
<dbReference type="Gene3D" id="3.30.70.141">
    <property type="entry name" value="Nucleoside diphosphate kinase-like domain"/>
    <property type="match status" value="1"/>
</dbReference>
<dbReference type="HAMAP" id="MF_00451">
    <property type="entry name" value="NDP_kinase"/>
    <property type="match status" value="1"/>
</dbReference>
<dbReference type="InterPro" id="IPR034907">
    <property type="entry name" value="NDK-like_dom"/>
</dbReference>
<dbReference type="InterPro" id="IPR036850">
    <property type="entry name" value="NDK-like_dom_sf"/>
</dbReference>
<dbReference type="InterPro" id="IPR001564">
    <property type="entry name" value="Nucleoside_diP_kinase"/>
</dbReference>
<dbReference type="InterPro" id="IPR023005">
    <property type="entry name" value="Nucleoside_diP_kinase_AS"/>
</dbReference>
<dbReference type="NCBIfam" id="NF001908">
    <property type="entry name" value="PRK00668.1"/>
    <property type="match status" value="1"/>
</dbReference>
<dbReference type="PANTHER" id="PTHR11349">
    <property type="entry name" value="NUCLEOSIDE DIPHOSPHATE KINASE"/>
    <property type="match status" value="1"/>
</dbReference>
<dbReference type="Pfam" id="PF00334">
    <property type="entry name" value="NDK"/>
    <property type="match status" value="1"/>
</dbReference>
<dbReference type="PRINTS" id="PR01243">
    <property type="entry name" value="NUCDPKINASE"/>
</dbReference>
<dbReference type="SMART" id="SM00562">
    <property type="entry name" value="NDK"/>
    <property type="match status" value="1"/>
</dbReference>
<dbReference type="SUPFAM" id="SSF54919">
    <property type="entry name" value="Nucleoside diphosphate kinase, NDK"/>
    <property type="match status" value="1"/>
</dbReference>
<dbReference type="PROSITE" id="PS00469">
    <property type="entry name" value="NDPK"/>
    <property type="match status" value="1"/>
</dbReference>
<dbReference type="PROSITE" id="PS51374">
    <property type="entry name" value="NDPK_LIKE"/>
    <property type="match status" value="1"/>
</dbReference>
<reference key="1">
    <citation type="journal article" date="1998" name="Biochemistry">
        <title>Nucleoside diphosphate kinase from bovine retina: purification, subcellular localization, molecular cloning, and three-dimensional structure.</title>
        <authorList>
            <person name="Abdulaev N.G."/>
            <person name="Karaschuk G.N."/>
            <person name="Ladner J.E."/>
            <person name="Kakuev D.L."/>
            <person name="Yakhyaev A.V."/>
            <person name="Tordova M."/>
            <person name="Gaidarov I.O."/>
            <person name="Popov V.I."/>
            <person name="Fujiwara J.H."/>
            <person name="Chinchilla D."/>
            <person name="Eisenstein E."/>
            <person name="Gilliland G.L."/>
            <person name="Ridge K.D."/>
        </authorList>
    </citation>
    <scope>NUCLEOTIDE SEQUENCE [MRNA]</scope>
    <scope>PROTEIN SEQUENCE OF 2-152</scope>
    <scope>CATALYTIC ACTIVITY</scope>
    <scope>SUBUNIT</scope>
    <scope>SUBCELLULAR LOCATION</scope>
    <scope>BLOCKAGE OF N-TERMINUS</scope>
    <scope>X-RAY CRYSTALLOGRAPHY (2.4 ANGSTROMS)</scope>
    <source>
        <tissue>Retina</tissue>
    </source>
</reference>
<comment type="function">
    <text>Major role in the synthesis of nucleoside triphosphates other than ATP. Possesses nucleoside-diphosphate kinase, serine/threonine-specific protein kinase, geranyl and farnesyl pyrophosphate kinase, histidine protein kinase and 3'-5' exonuclease activities. Involved in cell proliferation, differentiation and development, signal transduction, G protein-coupled receptor endocytosis, and gene expression. Required for neural development including neural patterning and cell fate determination.</text>
</comment>
<comment type="catalytic activity">
    <reaction evidence="2">
        <text>a 2'-deoxyribonucleoside 5'-diphosphate + ATP = a 2'-deoxyribonucleoside 5'-triphosphate + ADP</text>
        <dbReference type="Rhea" id="RHEA:44640"/>
        <dbReference type="ChEBI" id="CHEBI:30616"/>
        <dbReference type="ChEBI" id="CHEBI:61560"/>
        <dbReference type="ChEBI" id="CHEBI:73316"/>
        <dbReference type="ChEBI" id="CHEBI:456216"/>
        <dbReference type="EC" id="2.7.4.6"/>
    </reaction>
</comment>
<comment type="catalytic activity">
    <reaction evidence="2">
        <text>a ribonucleoside 5'-diphosphate + ATP = a ribonucleoside 5'-triphosphate + ADP</text>
        <dbReference type="Rhea" id="RHEA:18113"/>
        <dbReference type="ChEBI" id="CHEBI:30616"/>
        <dbReference type="ChEBI" id="CHEBI:57930"/>
        <dbReference type="ChEBI" id="CHEBI:61557"/>
        <dbReference type="ChEBI" id="CHEBI:456216"/>
        <dbReference type="EC" id="2.7.4.6"/>
    </reaction>
</comment>
<comment type="cofactor">
    <cofactor evidence="1">
        <name>Mg(2+)</name>
        <dbReference type="ChEBI" id="CHEBI:18420"/>
    </cofactor>
</comment>
<comment type="activity regulation">
    <text evidence="1">Autophosphorylation at His-118 increases serine/threonine protein kinase activity of the enzyme. Interaction with the SET complex inhibits exonuclease activity (By similarity).</text>
</comment>
<comment type="subunit">
    <text evidence="2">Homohexamer.</text>
</comment>
<comment type="subcellular location">
    <subcellularLocation>
        <location evidence="2">Cytoplasm</location>
    </subcellularLocation>
    <subcellularLocation>
        <location evidence="2">Cell membrane</location>
    </subcellularLocation>
    <subcellularLocation>
        <location evidence="1">Nucleus</location>
    </subcellularLocation>
</comment>
<comment type="PTM">
    <text>The N-terminus is blocked.</text>
</comment>
<comment type="similarity">
    <text evidence="3">Belongs to the NDK family.</text>
</comment>
<organism>
    <name type="scientific">Bos taurus</name>
    <name type="common">Bovine</name>
    <dbReference type="NCBI Taxonomy" id="9913"/>
    <lineage>
        <taxon>Eukaryota</taxon>
        <taxon>Metazoa</taxon>
        <taxon>Chordata</taxon>
        <taxon>Craniata</taxon>
        <taxon>Vertebrata</taxon>
        <taxon>Euteleostomi</taxon>
        <taxon>Mammalia</taxon>
        <taxon>Eutheria</taxon>
        <taxon>Laurasiatheria</taxon>
        <taxon>Artiodactyla</taxon>
        <taxon>Ruminantia</taxon>
        <taxon>Pecora</taxon>
        <taxon>Bovidae</taxon>
        <taxon>Bovinae</taxon>
        <taxon>Bos</taxon>
    </lineage>
</organism>
<evidence type="ECO:0000250" key="1"/>
<evidence type="ECO:0000269" key="2">
    <source>
    </source>
</evidence>
<evidence type="ECO:0000305" key="3"/>
<evidence type="ECO:0007829" key="4">
    <source>
        <dbReference type="PDB" id="1BE4"/>
    </source>
</evidence>
<feature type="initiator methionine" description="Removed" evidence="2">
    <location>
        <position position="1"/>
    </location>
</feature>
<feature type="chain" id="PRO_0000137112" description="Nucleoside diphosphate kinase A 2">
    <location>
        <begin position="2"/>
        <end position="152"/>
    </location>
</feature>
<feature type="active site" description="Pros-phosphohistidine intermediate">
    <location>
        <position position="118"/>
    </location>
</feature>
<feature type="binding site">
    <location>
        <position position="12"/>
    </location>
    <ligand>
        <name>ATP</name>
        <dbReference type="ChEBI" id="CHEBI:30616"/>
    </ligand>
</feature>
<feature type="binding site">
    <location>
        <position position="60"/>
    </location>
    <ligand>
        <name>ATP</name>
        <dbReference type="ChEBI" id="CHEBI:30616"/>
    </ligand>
</feature>
<feature type="binding site">
    <location>
        <position position="88"/>
    </location>
    <ligand>
        <name>ATP</name>
        <dbReference type="ChEBI" id="CHEBI:30616"/>
    </ligand>
</feature>
<feature type="binding site">
    <location>
        <position position="94"/>
    </location>
    <ligand>
        <name>ATP</name>
        <dbReference type="ChEBI" id="CHEBI:30616"/>
    </ligand>
</feature>
<feature type="binding site">
    <location>
        <position position="105"/>
    </location>
    <ligand>
        <name>ATP</name>
        <dbReference type="ChEBI" id="CHEBI:30616"/>
    </ligand>
</feature>
<feature type="binding site">
    <location>
        <position position="115"/>
    </location>
    <ligand>
        <name>ATP</name>
        <dbReference type="ChEBI" id="CHEBI:30616"/>
    </ligand>
</feature>
<feature type="strand" evidence="4">
    <location>
        <begin position="6"/>
        <end position="11"/>
    </location>
</feature>
<feature type="helix" evidence="4">
    <location>
        <begin position="13"/>
        <end position="17"/>
    </location>
</feature>
<feature type="helix" evidence="4">
    <location>
        <begin position="21"/>
        <end position="31"/>
    </location>
</feature>
<feature type="strand" evidence="4">
    <location>
        <begin position="34"/>
        <end position="41"/>
    </location>
</feature>
<feature type="helix" evidence="4">
    <location>
        <begin position="45"/>
        <end position="52"/>
    </location>
</feature>
<feature type="helix" evidence="4">
    <location>
        <begin position="53"/>
        <end position="55"/>
    </location>
</feature>
<feature type="strand" evidence="4">
    <location>
        <begin position="56"/>
        <end position="58"/>
    </location>
</feature>
<feature type="helix" evidence="4">
    <location>
        <begin position="61"/>
        <end position="63"/>
    </location>
</feature>
<feature type="helix" evidence="4">
    <location>
        <begin position="64"/>
        <end position="69"/>
    </location>
</feature>
<feature type="strand" evidence="4">
    <location>
        <begin position="73"/>
        <end position="80"/>
    </location>
</feature>
<feature type="helix" evidence="4">
    <location>
        <begin position="83"/>
        <end position="91"/>
    </location>
</feature>
<feature type="helix" evidence="4">
    <location>
        <begin position="96"/>
        <end position="98"/>
    </location>
</feature>
<feature type="helix" evidence="4">
    <location>
        <begin position="104"/>
        <end position="108"/>
    </location>
</feature>
<feature type="strand" evidence="4">
    <location>
        <begin position="117"/>
        <end position="119"/>
    </location>
</feature>
<feature type="helix" evidence="4">
    <location>
        <begin position="123"/>
        <end position="133"/>
    </location>
</feature>
<feature type="helix" evidence="4">
    <location>
        <begin position="136"/>
        <end position="138"/>
    </location>
</feature>
<feature type="helix" evidence="4">
    <location>
        <begin position="147"/>
        <end position="150"/>
    </location>
</feature>
<name>NDKA2_BOVIN</name>
<gene>
    <name type="primary">NME1-2</name>
</gene>
<accession>P52175</accession>
<sequence>MANSERTFIAIKPDGVQRGLMGEIIKRFEQKGFRLVAMKFMRASEDLLKEHYIDLKDRPFFAGLVKYMHSGPVVAMVWEGLNVVKTGRVMLGETNPADSKPGTIRGDFCIQVGRNIIHGSDSVESAEKEIALWFRPEELVNYKSCAQNWIYE</sequence>
<proteinExistence type="evidence at protein level"/>
<keyword id="KW-0002">3D-structure</keyword>
<keyword id="KW-0067">ATP-binding</keyword>
<keyword id="KW-1003">Cell membrane</keyword>
<keyword id="KW-0963">Cytoplasm</keyword>
<keyword id="KW-0221">Differentiation</keyword>
<keyword id="KW-0903">Direct protein sequencing</keyword>
<keyword id="KW-0254">Endocytosis</keyword>
<keyword id="KW-0418">Kinase</keyword>
<keyword id="KW-0460">Magnesium</keyword>
<keyword id="KW-0472">Membrane</keyword>
<keyword id="KW-0479">Metal-binding</keyword>
<keyword id="KW-0524">Neurogenesis</keyword>
<keyword id="KW-0546">Nucleotide metabolism</keyword>
<keyword id="KW-0547">Nucleotide-binding</keyword>
<keyword id="KW-0539">Nucleus</keyword>
<keyword id="KW-1185">Reference proteome</keyword>
<keyword id="KW-0808">Transferase</keyword>
<protein>
    <recommendedName>
        <fullName>Nucleoside diphosphate kinase A 2</fullName>
        <shortName>NDK A 2</shortName>
        <shortName>NDP kinase A 2</shortName>
        <ecNumber>2.7.4.6</ecNumber>
    </recommendedName>
    <alternativeName>
        <fullName>Nucleoside diphosphate kinase NBR-B</fullName>
        <shortName>NDK NBR-B</shortName>
    </alternativeName>
</protein>